<organism>
    <name type="scientific">Mus musculus</name>
    <name type="common">Mouse</name>
    <dbReference type="NCBI Taxonomy" id="10090"/>
    <lineage>
        <taxon>Eukaryota</taxon>
        <taxon>Metazoa</taxon>
        <taxon>Chordata</taxon>
        <taxon>Craniata</taxon>
        <taxon>Vertebrata</taxon>
        <taxon>Euteleostomi</taxon>
        <taxon>Mammalia</taxon>
        <taxon>Eutheria</taxon>
        <taxon>Euarchontoglires</taxon>
        <taxon>Glires</taxon>
        <taxon>Rodentia</taxon>
        <taxon>Myomorpha</taxon>
        <taxon>Muroidea</taxon>
        <taxon>Muridae</taxon>
        <taxon>Murinae</taxon>
        <taxon>Mus</taxon>
        <taxon>Mus</taxon>
    </lineage>
</organism>
<comment type="function">
    <text evidence="2">Microtubule-binding protein that negatively regulates centriole duplication. Binds to and stabilizes microtubules.</text>
</comment>
<comment type="subcellular location">
    <subcellularLocation>
        <location evidence="6">Nucleus</location>
    </subcellularLocation>
    <subcellularLocation>
        <location evidence="2">Cytoplasm</location>
        <location evidence="2">Cytoskeleton</location>
        <location evidence="2">Microtubule organizing center</location>
        <location evidence="2">Centrosome</location>
    </subcellularLocation>
    <subcellularLocation>
        <location evidence="5">Cytoplasm</location>
        <location evidence="5">Cytoskeleton</location>
        <location evidence="5">Microtubule organizing center</location>
        <location evidence="5">Centrosome</location>
        <location evidence="5">Centriole</location>
    </subcellularLocation>
    <text evidence="5">Localizes to the centriole lumen.</text>
</comment>
<comment type="alternative products">
    <event type="alternative splicing"/>
    <isoform>
        <id>Q9D067-1</id>
        <name>1</name>
        <sequence type="displayed"/>
    </isoform>
    <isoform>
        <id>Q9D067-2</id>
        <name>2</name>
        <sequence type="described" ref="VSP_027551 VSP_027552"/>
    </isoform>
    <isoform>
        <id>Q9D067-3</id>
        <name>3</name>
        <name>Mdm1a</name>
        <sequence type="described" ref="VSP_027549 VSP_027550"/>
    </isoform>
    <isoform>
        <id>Q9D067-4</id>
        <name>4</name>
        <sequence type="described" ref="VSP_027548"/>
    </isoform>
    <text>Additional isoforms may exist.</text>
</comment>
<comment type="tissue specificity">
    <text evidence="6">Widely expressed. Expressed at high levels in the testis.</text>
</comment>
<comment type="similarity">
    <text evidence="8">Belongs to the MDM1 family.</text>
</comment>
<proteinExistence type="evidence at protein level"/>
<keyword id="KW-0025">Alternative splicing</keyword>
<keyword id="KW-0175">Coiled coil</keyword>
<keyword id="KW-0963">Cytoplasm</keyword>
<keyword id="KW-0206">Cytoskeleton</keyword>
<keyword id="KW-0493">Microtubule</keyword>
<keyword id="KW-0539">Nucleus</keyword>
<keyword id="KW-0597">Phosphoprotein</keyword>
<keyword id="KW-1185">Reference proteome</keyword>
<keyword id="KW-0677">Repeat</keyword>
<dbReference type="EMBL" id="M20823">
    <property type="protein sequence ID" value="AAA39511.1"/>
    <property type="molecule type" value="mRNA"/>
</dbReference>
<dbReference type="EMBL" id="M20824">
    <property type="protein sequence ID" value="AAA39512.1"/>
    <property type="molecule type" value="mRNA"/>
</dbReference>
<dbReference type="EMBL" id="AK004789">
    <property type="protein sequence ID" value="BAB23566.1"/>
    <property type="molecule type" value="mRNA"/>
</dbReference>
<dbReference type="EMBL" id="AK011769">
    <property type="protein sequence ID" value="BAB27830.1"/>
    <property type="molecule type" value="mRNA"/>
</dbReference>
<dbReference type="CCDS" id="CCDS36069.1">
    <molecule id="Q9D067-1"/>
</dbReference>
<dbReference type="PIR" id="A31794">
    <property type="entry name" value="A31794"/>
</dbReference>
<dbReference type="PIR" id="B31794">
    <property type="entry name" value="B31794"/>
</dbReference>
<dbReference type="RefSeq" id="NP_001156376.1">
    <property type="nucleotide sequence ID" value="NM_001162904.1"/>
</dbReference>
<dbReference type="RefSeq" id="NP_001156377.1">
    <property type="nucleotide sequence ID" value="NM_001162905.1"/>
</dbReference>
<dbReference type="RefSeq" id="NP_001415514.1">
    <molecule id="Q9D067-4"/>
    <property type="nucleotide sequence ID" value="NM_001428585.1"/>
</dbReference>
<dbReference type="RefSeq" id="NP_034915.2">
    <property type="nucleotide sequence ID" value="NM_010785.2"/>
</dbReference>
<dbReference type="RefSeq" id="NP_683724.2">
    <molecule id="Q9D067-1"/>
    <property type="nucleotide sequence ID" value="NM_148922.4"/>
</dbReference>
<dbReference type="SMR" id="Q9D067"/>
<dbReference type="FunCoup" id="Q9D067">
    <property type="interactions" value="2885"/>
</dbReference>
<dbReference type="STRING" id="10090.ENSMUSP00000127919"/>
<dbReference type="iPTMnet" id="Q9D067"/>
<dbReference type="PhosphoSitePlus" id="Q9D067"/>
<dbReference type="jPOST" id="Q9D067"/>
<dbReference type="PaxDb" id="10090-ENSMUSP00000127919"/>
<dbReference type="PeptideAtlas" id="Q9D067"/>
<dbReference type="ProteomicsDB" id="292204">
    <molecule id="Q9D067-1"/>
</dbReference>
<dbReference type="ProteomicsDB" id="292205">
    <molecule id="Q9D067-2"/>
</dbReference>
<dbReference type="ProteomicsDB" id="292206">
    <molecule id="Q9D067-3"/>
</dbReference>
<dbReference type="ProteomicsDB" id="292207">
    <molecule id="Q9D067-4"/>
</dbReference>
<dbReference type="Antibodypedia" id="29303">
    <property type="antibodies" value="131 antibodies from 24 providers"/>
</dbReference>
<dbReference type="DNASU" id="17245"/>
<dbReference type="Ensembl" id="ENSMUST00000020437.13">
    <molecule id="Q9D067-1"/>
    <property type="protein sequence ID" value="ENSMUSP00000020437.6"/>
    <property type="gene ID" value="ENSMUSG00000020212.15"/>
</dbReference>
<dbReference type="GeneID" id="17245"/>
<dbReference type="KEGG" id="mmu:17245"/>
<dbReference type="UCSC" id="uc007hds.2">
    <molecule id="Q9D067-3"/>
    <property type="organism name" value="mouse"/>
</dbReference>
<dbReference type="UCSC" id="uc007hdt.2">
    <molecule id="Q9D067-1"/>
    <property type="organism name" value="mouse"/>
</dbReference>
<dbReference type="AGR" id="MGI:96951"/>
<dbReference type="CTD" id="56890"/>
<dbReference type="MGI" id="MGI:96951">
    <property type="gene designation" value="Mdm1"/>
</dbReference>
<dbReference type="VEuPathDB" id="HostDB:ENSMUSG00000020212"/>
<dbReference type="eggNOG" id="ENOG502QVRV">
    <property type="taxonomic scope" value="Eukaryota"/>
</dbReference>
<dbReference type="GeneTree" id="ENSGT00390000004106"/>
<dbReference type="InParanoid" id="Q9D067"/>
<dbReference type="OrthoDB" id="9999940at2759"/>
<dbReference type="PhylomeDB" id="Q9D067"/>
<dbReference type="BioGRID-ORCS" id="17245">
    <property type="hits" value="5 hits in 78 CRISPR screens"/>
</dbReference>
<dbReference type="PRO" id="PR:Q9D067"/>
<dbReference type="Proteomes" id="UP000000589">
    <property type="component" value="Chromosome 10"/>
</dbReference>
<dbReference type="RNAct" id="Q9D067">
    <property type="molecule type" value="protein"/>
</dbReference>
<dbReference type="Bgee" id="ENSMUSG00000020212">
    <property type="expression patterns" value="Expressed in spermatid and 166 other cell types or tissues"/>
</dbReference>
<dbReference type="ExpressionAtlas" id="Q9D067">
    <property type="expression patterns" value="baseline and differential"/>
</dbReference>
<dbReference type="GO" id="GO:0005814">
    <property type="term" value="C:centriole"/>
    <property type="evidence" value="ECO:0000314"/>
    <property type="project" value="UniProtKB"/>
</dbReference>
<dbReference type="GO" id="GO:0005813">
    <property type="term" value="C:centrosome"/>
    <property type="evidence" value="ECO:0000314"/>
    <property type="project" value="MGI"/>
</dbReference>
<dbReference type="GO" id="GO:0005737">
    <property type="term" value="C:cytoplasm"/>
    <property type="evidence" value="ECO:0007669"/>
    <property type="project" value="UniProtKB-KW"/>
</dbReference>
<dbReference type="GO" id="GO:0005874">
    <property type="term" value="C:microtubule"/>
    <property type="evidence" value="ECO:0007669"/>
    <property type="project" value="UniProtKB-KW"/>
</dbReference>
<dbReference type="GO" id="GO:0097730">
    <property type="term" value="C:non-motile cilium"/>
    <property type="evidence" value="ECO:0000314"/>
    <property type="project" value="MGI"/>
</dbReference>
<dbReference type="GO" id="GO:0005634">
    <property type="term" value="C:nucleus"/>
    <property type="evidence" value="ECO:0000250"/>
    <property type="project" value="UniProtKB"/>
</dbReference>
<dbReference type="GO" id="GO:0008017">
    <property type="term" value="F:microtubule binding"/>
    <property type="evidence" value="ECO:0000250"/>
    <property type="project" value="UniProtKB"/>
</dbReference>
<dbReference type="GO" id="GO:0046600">
    <property type="term" value="P:negative regulation of centriole replication"/>
    <property type="evidence" value="ECO:0000250"/>
    <property type="project" value="UniProtKB"/>
</dbReference>
<dbReference type="GO" id="GO:0060041">
    <property type="term" value="P:retina development in camera-type eye"/>
    <property type="evidence" value="ECO:0000315"/>
    <property type="project" value="MGI"/>
</dbReference>
<dbReference type="InterPro" id="IPR029136">
    <property type="entry name" value="MDM1"/>
</dbReference>
<dbReference type="PANTHER" id="PTHR32078">
    <property type="entry name" value="NUCLEAR PROTEIN MDM1"/>
    <property type="match status" value="1"/>
</dbReference>
<dbReference type="PANTHER" id="PTHR32078:SF1">
    <property type="entry name" value="NUCLEAR PROTEIN MDM1"/>
    <property type="match status" value="1"/>
</dbReference>
<dbReference type="Pfam" id="PF15501">
    <property type="entry name" value="MDM1"/>
    <property type="match status" value="1"/>
</dbReference>
<name>MDM1_MOUSE</name>
<protein>
    <recommendedName>
        <fullName>Nuclear protein MDM1</fullName>
    </recommendedName>
    <alternativeName>
        <fullName>Mdm4 transformed 3T3 cell double minute 1 protein</fullName>
    </alternativeName>
    <alternativeName>
        <fullName>Mouse double minute 1</fullName>
    </alternativeName>
</protein>
<gene>
    <name type="primary">Mdm1</name>
    <name type="synonym">Mdm-1</name>
</gene>
<evidence type="ECO:0000250" key="1">
    <source>
        <dbReference type="UniProtKB" id="Q5PQN4"/>
    </source>
</evidence>
<evidence type="ECO:0000250" key="2">
    <source>
        <dbReference type="UniProtKB" id="Q8TC05"/>
    </source>
</evidence>
<evidence type="ECO:0000255" key="3"/>
<evidence type="ECO:0000256" key="4">
    <source>
        <dbReference type="SAM" id="MobiDB-lite"/>
    </source>
</evidence>
<evidence type="ECO:0000269" key="5">
    <source>
    </source>
</evidence>
<evidence type="ECO:0000269" key="6">
    <source>
    </source>
</evidence>
<evidence type="ECO:0000303" key="7">
    <source>
    </source>
</evidence>
<evidence type="ECO:0000305" key="8"/>
<evidence type="ECO:0007744" key="9">
    <source>
    </source>
</evidence>
<sequence length="708" mass="79689">MPVRFKGLSEYQRNFLWKKSYLSESYNPSVGQKYSWAGLRSDQLGITKEPGFISKRRVPYHDPQISKYLEWNGTVRKKDTLVPPEPQAFGTPKPQEAEQGEDANQEAVLSLEASRVPKRTRSHSADSRAEGVSDTVEKHQGVTRSHAPVSADVELRPSSKQPLSQSIDPRLDRHLRKKAGLAVVPTNNALRNSEYQRQFVWKTSKESAPVFASNQVFRNKSQIIPQFQGNTFTHETEYKRNFKGLTPVKEPKSREYLKGNSSLEMLTPVKKADEPLDLEVDMASEDSDQSVKKPASWRHQRLGKVNSEYRAKFLSPAQYFYKAGAWTRVKENLSNQVKELREKAESYRKRVQGTHFSRDHLNQIMSDSNCCWDVSSVTSSEGTVSSNIRALDLAGDLTNHRTPQKHPPTKLEERKVASGEQPLKNSTRRLEMPEPAASVRRKLAWDAEESTKEDTQEEPRAEEDGREERGQDKQTCAVELEKPDTQTPKADRLTEGSETSSVSSGKGGRLPTPRLRELGIQRTHHDLTTPAVGGAVLVSPSKVKPPGLEQRRRASSQDGLETLKKDITKKGKPRPMSLLTSPAAGMKTVDPLPLREDCEANVLRFADTLPVSKILDRQPSTPGQLPPCAPPYCHPSSRIQGRLRDPEFQHNMGKPRTNNLQLHPHDAFNDEDADRLSEISARSAVSSLRAFQTLARAQKRKENFWGKP</sequence>
<reference key="1">
    <citation type="journal article" date="1988" name="J. Biol. Chem.">
        <title>A gene amplified in a transformed mouse cell line undergoes complex transcriptional processing and encodes a nuclear protein.</title>
        <authorList>
            <person name="Snyder L.C."/>
            <person name="Trusko S.P."/>
            <person name="Freeman N."/>
            <person name="Eshleman J.R."/>
            <person name="Fakharzadeh S.S."/>
            <person name="George D.L."/>
        </authorList>
    </citation>
    <scope>NUCLEOTIDE SEQUENCE [MRNA] (ISOFORMS 2; 3 AND 4)</scope>
    <scope>SUBCELLULAR LOCATION</scope>
    <scope>TISSUE SPECIFICITY</scope>
    <source>
        <strain>BALB/cJ</strain>
    </source>
</reference>
<reference key="2">
    <citation type="journal article" date="2005" name="Science">
        <title>The transcriptional landscape of the mammalian genome.</title>
        <authorList>
            <person name="Carninci P."/>
            <person name="Kasukawa T."/>
            <person name="Katayama S."/>
            <person name="Gough J."/>
            <person name="Frith M.C."/>
            <person name="Maeda N."/>
            <person name="Oyama R."/>
            <person name="Ravasi T."/>
            <person name="Lenhard B."/>
            <person name="Wells C."/>
            <person name="Kodzius R."/>
            <person name="Shimokawa K."/>
            <person name="Bajic V.B."/>
            <person name="Brenner S.E."/>
            <person name="Batalov S."/>
            <person name="Forrest A.R."/>
            <person name="Zavolan M."/>
            <person name="Davis M.J."/>
            <person name="Wilming L.G."/>
            <person name="Aidinis V."/>
            <person name="Allen J.E."/>
            <person name="Ambesi-Impiombato A."/>
            <person name="Apweiler R."/>
            <person name="Aturaliya R.N."/>
            <person name="Bailey T.L."/>
            <person name="Bansal M."/>
            <person name="Baxter L."/>
            <person name="Beisel K.W."/>
            <person name="Bersano T."/>
            <person name="Bono H."/>
            <person name="Chalk A.M."/>
            <person name="Chiu K.P."/>
            <person name="Choudhary V."/>
            <person name="Christoffels A."/>
            <person name="Clutterbuck D.R."/>
            <person name="Crowe M.L."/>
            <person name="Dalla E."/>
            <person name="Dalrymple B.P."/>
            <person name="de Bono B."/>
            <person name="Della Gatta G."/>
            <person name="di Bernardo D."/>
            <person name="Down T."/>
            <person name="Engstrom P."/>
            <person name="Fagiolini M."/>
            <person name="Faulkner G."/>
            <person name="Fletcher C.F."/>
            <person name="Fukushima T."/>
            <person name="Furuno M."/>
            <person name="Futaki S."/>
            <person name="Gariboldi M."/>
            <person name="Georgii-Hemming P."/>
            <person name="Gingeras T.R."/>
            <person name="Gojobori T."/>
            <person name="Green R.E."/>
            <person name="Gustincich S."/>
            <person name="Harbers M."/>
            <person name="Hayashi Y."/>
            <person name="Hensch T.K."/>
            <person name="Hirokawa N."/>
            <person name="Hill D."/>
            <person name="Huminiecki L."/>
            <person name="Iacono M."/>
            <person name="Ikeo K."/>
            <person name="Iwama A."/>
            <person name="Ishikawa T."/>
            <person name="Jakt M."/>
            <person name="Kanapin A."/>
            <person name="Katoh M."/>
            <person name="Kawasawa Y."/>
            <person name="Kelso J."/>
            <person name="Kitamura H."/>
            <person name="Kitano H."/>
            <person name="Kollias G."/>
            <person name="Krishnan S.P."/>
            <person name="Kruger A."/>
            <person name="Kummerfeld S.K."/>
            <person name="Kurochkin I.V."/>
            <person name="Lareau L.F."/>
            <person name="Lazarevic D."/>
            <person name="Lipovich L."/>
            <person name="Liu J."/>
            <person name="Liuni S."/>
            <person name="McWilliam S."/>
            <person name="Madan Babu M."/>
            <person name="Madera M."/>
            <person name="Marchionni L."/>
            <person name="Matsuda H."/>
            <person name="Matsuzawa S."/>
            <person name="Miki H."/>
            <person name="Mignone F."/>
            <person name="Miyake S."/>
            <person name="Morris K."/>
            <person name="Mottagui-Tabar S."/>
            <person name="Mulder N."/>
            <person name="Nakano N."/>
            <person name="Nakauchi H."/>
            <person name="Ng P."/>
            <person name="Nilsson R."/>
            <person name="Nishiguchi S."/>
            <person name="Nishikawa S."/>
            <person name="Nori F."/>
            <person name="Ohara O."/>
            <person name="Okazaki Y."/>
            <person name="Orlando V."/>
            <person name="Pang K.C."/>
            <person name="Pavan W.J."/>
            <person name="Pavesi G."/>
            <person name="Pesole G."/>
            <person name="Petrovsky N."/>
            <person name="Piazza S."/>
            <person name="Reed J."/>
            <person name="Reid J.F."/>
            <person name="Ring B.Z."/>
            <person name="Ringwald M."/>
            <person name="Rost B."/>
            <person name="Ruan Y."/>
            <person name="Salzberg S.L."/>
            <person name="Sandelin A."/>
            <person name="Schneider C."/>
            <person name="Schoenbach C."/>
            <person name="Sekiguchi K."/>
            <person name="Semple C.A."/>
            <person name="Seno S."/>
            <person name="Sessa L."/>
            <person name="Sheng Y."/>
            <person name="Shibata Y."/>
            <person name="Shimada H."/>
            <person name="Shimada K."/>
            <person name="Silva D."/>
            <person name="Sinclair B."/>
            <person name="Sperling S."/>
            <person name="Stupka E."/>
            <person name="Sugiura K."/>
            <person name="Sultana R."/>
            <person name="Takenaka Y."/>
            <person name="Taki K."/>
            <person name="Tammoja K."/>
            <person name="Tan S.L."/>
            <person name="Tang S."/>
            <person name="Taylor M.S."/>
            <person name="Tegner J."/>
            <person name="Teichmann S.A."/>
            <person name="Ueda H.R."/>
            <person name="van Nimwegen E."/>
            <person name="Verardo R."/>
            <person name="Wei C.L."/>
            <person name="Yagi K."/>
            <person name="Yamanishi H."/>
            <person name="Zabarovsky E."/>
            <person name="Zhu S."/>
            <person name="Zimmer A."/>
            <person name="Hide W."/>
            <person name="Bult C."/>
            <person name="Grimmond S.M."/>
            <person name="Teasdale R.D."/>
            <person name="Liu E.T."/>
            <person name="Brusic V."/>
            <person name="Quackenbush J."/>
            <person name="Wahlestedt C."/>
            <person name="Mattick J.S."/>
            <person name="Hume D.A."/>
            <person name="Kai C."/>
            <person name="Sasaki D."/>
            <person name="Tomaru Y."/>
            <person name="Fukuda S."/>
            <person name="Kanamori-Katayama M."/>
            <person name="Suzuki M."/>
            <person name="Aoki J."/>
            <person name="Arakawa T."/>
            <person name="Iida J."/>
            <person name="Imamura K."/>
            <person name="Itoh M."/>
            <person name="Kato T."/>
            <person name="Kawaji H."/>
            <person name="Kawagashira N."/>
            <person name="Kawashima T."/>
            <person name="Kojima M."/>
            <person name="Kondo S."/>
            <person name="Konno H."/>
            <person name="Nakano K."/>
            <person name="Ninomiya N."/>
            <person name="Nishio T."/>
            <person name="Okada M."/>
            <person name="Plessy C."/>
            <person name="Shibata K."/>
            <person name="Shiraki T."/>
            <person name="Suzuki S."/>
            <person name="Tagami M."/>
            <person name="Waki K."/>
            <person name="Watahiki A."/>
            <person name="Okamura-Oho Y."/>
            <person name="Suzuki H."/>
            <person name="Kawai J."/>
            <person name="Hayashizaki Y."/>
        </authorList>
    </citation>
    <scope>NUCLEOTIDE SEQUENCE [LARGE SCALE MRNA] (ISOFORM 1)</scope>
    <source>
        <strain>C57BL/6J</strain>
        <tissue>Lung</tissue>
    </source>
</reference>
<reference key="3">
    <citation type="journal article" date="2010" name="Cell">
        <title>A tissue-specific atlas of mouse protein phosphorylation and expression.</title>
        <authorList>
            <person name="Huttlin E.L."/>
            <person name="Jedrychowski M.P."/>
            <person name="Elias J.E."/>
            <person name="Goswami T."/>
            <person name="Rad R."/>
            <person name="Beausoleil S.A."/>
            <person name="Villen J."/>
            <person name="Haas W."/>
            <person name="Sowa M.E."/>
            <person name="Gygi S.P."/>
        </authorList>
    </citation>
    <scope>PHOSPHORYLATION [LARGE SCALE ANALYSIS] AT SER-124; SER-127; SER-315; SER-418; SER-555 AND SER-556</scope>
    <scope>IDENTIFICATION BY MASS SPECTROMETRY [LARGE SCALE ANALYSIS]</scope>
    <source>
        <tissue>Brain</tissue>
        <tissue>Kidney</tissue>
        <tissue>Lung</tissue>
        <tissue>Spleen</tissue>
        <tissue>Testis</tissue>
    </source>
</reference>
<reference key="4">
    <citation type="journal article" date="2015" name="Mol. Biol. Cell">
        <title>MDM1 is a microtubule-binding protein that negatively regulates centriole duplication.</title>
        <authorList>
            <person name="Van de Mark D."/>
            <person name="Kong D."/>
            <person name="Loncarek J."/>
            <person name="Stearns T."/>
        </authorList>
    </citation>
    <scope>SUBCELLULAR LOCATION</scope>
</reference>
<accession>Q9D067</accession>
<accession>Q61841</accession>
<accession>Q61842</accession>
<accession>Q9DBR6</accession>
<feature type="chain" id="PRO_0000299060" description="Nuclear protein MDM1">
    <location>
        <begin position="1"/>
        <end position="708"/>
    </location>
</feature>
<feature type="region of interest" description="Disordered" evidence="4">
    <location>
        <begin position="79"/>
        <end position="166"/>
    </location>
</feature>
<feature type="region of interest" description="Disordered" evidence="4">
    <location>
        <begin position="394"/>
        <end position="590"/>
    </location>
</feature>
<feature type="coiled-coil region" evidence="3">
    <location>
        <begin position="322"/>
        <end position="355"/>
    </location>
</feature>
<feature type="short sequence motif" description="ST]-E-Y-X(3)-F motif 1; required for efficient microtubule binding and stabilization" evidence="2">
    <location>
        <begin position="9"/>
        <end position="15"/>
    </location>
</feature>
<feature type="short sequence motif" description="ST]-E-Y-X(3)-F motif 2; required for efficient microtubule binding and stabilization" evidence="2">
    <location>
        <begin position="193"/>
        <end position="199"/>
    </location>
</feature>
<feature type="short sequence motif" description="ST]-E-Y-X(3)-F motif 3; required for efficient microtubule binding" evidence="2">
    <location>
        <begin position="236"/>
        <end position="242"/>
    </location>
</feature>
<feature type="short sequence motif" description="ST]-E-Y-X(3)-F motif 4; required for efficient microtubule binding and stabilization" evidence="2">
    <location>
        <begin position="307"/>
        <end position="313"/>
    </location>
</feature>
<feature type="compositionally biased region" description="Basic and acidic residues" evidence="4">
    <location>
        <begin position="123"/>
        <end position="140"/>
    </location>
</feature>
<feature type="compositionally biased region" description="Basic and acidic residues" evidence="4">
    <location>
        <begin position="443"/>
        <end position="472"/>
    </location>
</feature>
<feature type="compositionally biased region" description="Basic and acidic residues" evidence="4">
    <location>
        <begin position="479"/>
        <end position="495"/>
    </location>
</feature>
<feature type="compositionally biased region" description="Basic and acidic residues" evidence="4">
    <location>
        <begin position="514"/>
        <end position="527"/>
    </location>
</feature>
<feature type="modified residue" description="Phosphoserine" evidence="9">
    <location>
        <position position="124"/>
    </location>
</feature>
<feature type="modified residue" description="Phosphoserine" evidence="9">
    <location>
        <position position="127"/>
    </location>
</feature>
<feature type="modified residue" description="Phosphoserine" evidence="1">
    <location>
        <position position="284"/>
    </location>
</feature>
<feature type="modified residue" description="Phosphoserine" evidence="1">
    <location>
        <position position="287"/>
    </location>
</feature>
<feature type="modified residue" description="Phosphoserine" evidence="9">
    <location>
        <position position="315"/>
    </location>
</feature>
<feature type="modified residue" description="Phosphoserine" evidence="9">
    <location>
        <position position="418"/>
    </location>
</feature>
<feature type="modified residue" description="Phosphoserine" evidence="9">
    <location>
        <position position="555"/>
    </location>
</feature>
<feature type="modified residue" description="Phosphoserine" evidence="9">
    <location>
        <position position="556"/>
    </location>
</feature>
<feature type="modified residue" description="Phosphoserine" evidence="2">
    <location>
        <position position="581"/>
    </location>
</feature>
<feature type="splice variant" id="VSP_027548" description="In isoform 4." evidence="7">
    <location>
        <begin position="171"/>
        <end position="215"/>
    </location>
</feature>
<feature type="splice variant" id="VSP_027549" description="In isoform 3." evidence="7">
    <original>FRNKSQ</original>
    <variation>AQEMRF</variation>
    <location>
        <begin position="217"/>
        <end position="222"/>
    </location>
</feature>
<feature type="splice variant" id="VSP_027550" description="In isoform 3." evidence="7">
    <location>
        <begin position="223"/>
        <end position="708"/>
    </location>
</feature>
<feature type="splice variant" id="VSP_027551" description="In isoform 2." evidence="7">
    <original>D</original>
    <variation>EG</variation>
    <location>
        <position position="607"/>
    </location>
</feature>
<feature type="splice variant" id="VSP_027552" description="In isoform 2." evidence="7">
    <original>MGKPRTNNLQLHPHDAFNDED</original>
    <variation>N</variation>
    <location>
        <begin position="652"/>
        <end position="672"/>
    </location>
</feature>
<feature type="sequence conflict" description="In Ref. 2; BAB27830." evidence="8" ref="2">
    <original>R</original>
    <variation>K</variation>
    <location>
        <position position="40"/>
    </location>
</feature>
<feature type="sequence conflict" description="In Ref. 1; AAA39511." evidence="8" ref="1">
    <original>S</original>
    <variation>L</variation>
    <location>
        <position position="438"/>
    </location>
</feature>
<feature type="sequence conflict" description="In Ref. 2; BAB23566." evidence="8" ref="2">
    <original>K</original>
    <variation>E</variation>
    <location>
        <position position="442"/>
    </location>
</feature>
<feature type="sequence conflict" description="In Ref. 2; BAB23566." evidence="8" ref="2">
    <original>Q</original>
    <variation>P</variation>
    <location>
        <position position="456"/>
    </location>
</feature>
<feature type="sequence conflict" description="In Ref. 1; AAA39511." evidence="8" ref="1">
    <original>D</original>
    <variation>G</variation>
    <location>
        <position position="472"/>
    </location>
</feature>